<comment type="function">
    <text evidence="1">Produces ATP from ADP in the presence of a proton gradient across the membrane. The catalytic sites are hosted primarily by the beta subunits.</text>
</comment>
<comment type="catalytic activity">
    <reaction evidence="1">
        <text>ATP + H2O + 4 H(+)(in) = ADP + phosphate + 5 H(+)(out)</text>
        <dbReference type="Rhea" id="RHEA:57720"/>
        <dbReference type="ChEBI" id="CHEBI:15377"/>
        <dbReference type="ChEBI" id="CHEBI:15378"/>
        <dbReference type="ChEBI" id="CHEBI:30616"/>
        <dbReference type="ChEBI" id="CHEBI:43474"/>
        <dbReference type="ChEBI" id="CHEBI:456216"/>
        <dbReference type="EC" id="7.1.2.2"/>
    </reaction>
</comment>
<comment type="subunit">
    <text evidence="1">F-type ATPases have 2 components, CF(1) - the catalytic core - and CF(0) - the membrane proton channel. CF(1) has five subunits: alpha(3), beta(3), gamma(1), delta(1), epsilon(1). CF(0) has three main subunits: a(1), b(2) and c(9-12). The alpha and beta chains form an alternating ring which encloses part of the gamma chain. CF(1) is attached to CF(0) by a central stalk formed by the gamma and epsilon chains, while a peripheral stalk is formed by the delta and b chains.</text>
</comment>
<comment type="subcellular location">
    <subcellularLocation>
        <location evidence="1">Cell membrane</location>
        <topology evidence="1">Peripheral membrane protein</topology>
    </subcellularLocation>
</comment>
<comment type="similarity">
    <text evidence="1">Belongs to the ATPase alpha/beta chains family.</text>
</comment>
<name>ATPB_CALS4</name>
<sequence>MKKGYITQVIGPVVDIRFEGDLPPINNAIKIPMGDRELVVEVAQHIGDNTVRCVAMASTDGLRRGMECIDTGGPIMVPVGKGVLGRMFNVLGQPIDELGEVKDVKYMPIHKKPPSFEEQNPATEILETGIKVIDLLTPYPKGGKIGLFGGAGVGKTVLIMELIRNVAIEHGGYSIFAGVGERSREGNELWLEMHEAGVIDKTAFVFGQMNEPPGARMRVGLAGLTIAEYFRDEEHQDVLLFIDNIFRFVQAGSEVSALLGRMPSAVGYQPTLATEMGALQERITSTKKGSITSVQAIYVPADDLTDPAPATTFAHLDATTVLSRSIAEMGIYPAVDPLDSTSRILEPHIVGEEHYYVARKVQEILQRYKELQDIIAILGMEELTEEDRLIVYRARKIQRFLSQPFFVAEAFTGTPGKYVPLKETIRGFKKIVEGEMDDIPEPAFYMVGTIDEVYEKAEKMK</sequence>
<proteinExistence type="inferred from homology"/>
<reference key="1">
    <citation type="journal article" date="2002" name="Genome Res.">
        <title>A complete sequence of the T. tengcongensis genome.</title>
        <authorList>
            <person name="Bao Q."/>
            <person name="Tian Y."/>
            <person name="Li W."/>
            <person name="Xu Z."/>
            <person name="Xuan Z."/>
            <person name="Hu S."/>
            <person name="Dong W."/>
            <person name="Yang J."/>
            <person name="Chen Y."/>
            <person name="Xue Y."/>
            <person name="Xu Y."/>
            <person name="Lai X."/>
            <person name="Huang L."/>
            <person name="Dong X."/>
            <person name="Ma Y."/>
            <person name="Ling L."/>
            <person name="Tan H."/>
            <person name="Chen R."/>
            <person name="Wang J."/>
            <person name="Yu J."/>
            <person name="Yang H."/>
        </authorList>
    </citation>
    <scope>NUCLEOTIDE SEQUENCE [LARGE SCALE GENOMIC DNA]</scope>
    <source>
        <strain>DSM 15242 / JCM 11007 / NBRC 100824 / MB4</strain>
    </source>
</reference>
<protein>
    <recommendedName>
        <fullName evidence="1">ATP synthase subunit beta</fullName>
        <ecNumber evidence="1">7.1.2.2</ecNumber>
    </recommendedName>
    <alternativeName>
        <fullName evidence="1">ATP synthase F1 sector subunit beta</fullName>
    </alternativeName>
    <alternativeName>
        <fullName evidence="1">F-ATPase subunit beta</fullName>
    </alternativeName>
</protein>
<feature type="chain" id="PRO_0000254412" description="ATP synthase subunit beta">
    <location>
        <begin position="1"/>
        <end position="461"/>
    </location>
</feature>
<feature type="binding site" evidence="1">
    <location>
        <begin position="149"/>
        <end position="156"/>
    </location>
    <ligand>
        <name>ATP</name>
        <dbReference type="ChEBI" id="CHEBI:30616"/>
    </ligand>
</feature>
<gene>
    <name evidence="1" type="primary">atpD</name>
    <name type="ordered locus">TTE0637</name>
</gene>
<evidence type="ECO:0000255" key="1">
    <source>
        <dbReference type="HAMAP-Rule" id="MF_01347"/>
    </source>
</evidence>
<keyword id="KW-0066">ATP synthesis</keyword>
<keyword id="KW-0067">ATP-binding</keyword>
<keyword id="KW-1003">Cell membrane</keyword>
<keyword id="KW-0139">CF(1)</keyword>
<keyword id="KW-0375">Hydrogen ion transport</keyword>
<keyword id="KW-0406">Ion transport</keyword>
<keyword id="KW-0472">Membrane</keyword>
<keyword id="KW-0547">Nucleotide-binding</keyword>
<keyword id="KW-1185">Reference proteome</keyword>
<keyword id="KW-1278">Translocase</keyword>
<keyword id="KW-0813">Transport</keyword>
<organism>
    <name type="scientific">Caldanaerobacter subterraneus subsp. tengcongensis (strain DSM 15242 / JCM 11007 / NBRC 100824 / MB4)</name>
    <name type="common">Thermoanaerobacter tengcongensis</name>
    <dbReference type="NCBI Taxonomy" id="273068"/>
    <lineage>
        <taxon>Bacteria</taxon>
        <taxon>Bacillati</taxon>
        <taxon>Bacillota</taxon>
        <taxon>Clostridia</taxon>
        <taxon>Thermoanaerobacterales</taxon>
        <taxon>Thermoanaerobacteraceae</taxon>
        <taxon>Caldanaerobacter</taxon>
    </lineage>
</organism>
<accession>Q8RC15</accession>
<dbReference type="EC" id="7.1.2.2" evidence="1"/>
<dbReference type="EMBL" id="AE008691">
    <property type="protein sequence ID" value="AAM23905.1"/>
    <property type="molecule type" value="Genomic_DNA"/>
</dbReference>
<dbReference type="RefSeq" id="WP_011025047.1">
    <property type="nucleotide sequence ID" value="NC_003869.1"/>
</dbReference>
<dbReference type="SMR" id="Q8RC15"/>
<dbReference type="STRING" id="273068.TTE0637"/>
<dbReference type="KEGG" id="tte:TTE0637"/>
<dbReference type="eggNOG" id="COG0055">
    <property type="taxonomic scope" value="Bacteria"/>
</dbReference>
<dbReference type="HOGENOM" id="CLU_022398_0_2_9"/>
<dbReference type="OrthoDB" id="9803053at2"/>
<dbReference type="Proteomes" id="UP000000555">
    <property type="component" value="Chromosome"/>
</dbReference>
<dbReference type="GO" id="GO:0005886">
    <property type="term" value="C:plasma membrane"/>
    <property type="evidence" value="ECO:0007669"/>
    <property type="project" value="UniProtKB-SubCell"/>
</dbReference>
<dbReference type="GO" id="GO:0045259">
    <property type="term" value="C:proton-transporting ATP synthase complex"/>
    <property type="evidence" value="ECO:0007669"/>
    <property type="project" value="UniProtKB-KW"/>
</dbReference>
<dbReference type="GO" id="GO:0005524">
    <property type="term" value="F:ATP binding"/>
    <property type="evidence" value="ECO:0007669"/>
    <property type="project" value="UniProtKB-UniRule"/>
</dbReference>
<dbReference type="GO" id="GO:0016887">
    <property type="term" value="F:ATP hydrolysis activity"/>
    <property type="evidence" value="ECO:0007669"/>
    <property type="project" value="InterPro"/>
</dbReference>
<dbReference type="GO" id="GO:0046933">
    <property type="term" value="F:proton-transporting ATP synthase activity, rotational mechanism"/>
    <property type="evidence" value="ECO:0007669"/>
    <property type="project" value="UniProtKB-UniRule"/>
</dbReference>
<dbReference type="CDD" id="cd18110">
    <property type="entry name" value="ATP-synt_F1_beta_C"/>
    <property type="match status" value="1"/>
</dbReference>
<dbReference type="CDD" id="cd18115">
    <property type="entry name" value="ATP-synt_F1_beta_N"/>
    <property type="match status" value="1"/>
</dbReference>
<dbReference type="CDD" id="cd01133">
    <property type="entry name" value="F1-ATPase_beta_CD"/>
    <property type="match status" value="1"/>
</dbReference>
<dbReference type="FunFam" id="1.10.1140.10:FF:000001">
    <property type="entry name" value="ATP synthase subunit beta"/>
    <property type="match status" value="1"/>
</dbReference>
<dbReference type="FunFam" id="2.40.10.170:FF:000005">
    <property type="entry name" value="ATP synthase subunit beta"/>
    <property type="match status" value="1"/>
</dbReference>
<dbReference type="FunFam" id="3.40.50.300:FF:000026">
    <property type="entry name" value="ATP synthase subunit beta"/>
    <property type="match status" value="1"/>
</dbReference>
<dbReference type="Gene3D" id="2.40.10.170">
    <property type="match status" value="1"/>
</dbReference>
<dbReference type="Gene3D" id="1.10.1140.10">
    <property type="entry name" value="Bovine Mitochondrial F1-atpase, Atp Synthase Beta Chain, Chain D, domain 3"/>
    <property type="match status" value="1"/>
</dbReference>
<dbReference type="Gene3D" id="3.40.50.300">
    <property type="entry name" value="P-loop containing nucleotide triphosphate hydrolases"/>
    <property type="match status" value="1"/>
</dbReference>
<dbReference type="HAMAP" id="MF_01347">
    <property type="entry name" value="ATP_synth_beta_bact"/>
    <property type="match status" value="1"/>
</dbReference>
<dbReference type="InterPro" id="IPR003593">
    <property type="entry name" value="AAA+_ATPase"/>
</dbReference>
<dbReference type="InterPro" id="IPR055190">
    <property type="entry name" value="ATP-synt_VA_C"/>
</dbReference>
<dbReference type="InterPro" id="IPR005722">
    <property type="entry name" value="ATP_synth_F1_bsu"/>
</dbReference>
<dbReference type="InterPro" id="IPR020003">
    <property type="entry name" value="ATPase_a/bsu_AS"/>
</dbReference>
<dbReference type="InterPro" id="IPR050053">
    <property type="entry name" value="ATPase_alpha/beta_chains"/>
</dbReference>
<dbReference type="InterPro" id="IPR004100">
    <property type="entry name" value="ATPase_F1/V1/A1_a/bsu_N"/>
</dbReference>
<dbReference type="InterPro" id="IPR036121">
    <property type="entry name" value="ATPase_F1/V1/A1_a/bsu_N_sf"/>
</dbReference>
<dbReference type="InterPro" id="IPR000194">
    <property type="entry name" value="ATPase_F1/V1/A1_a/bsu_nucl-bd"/>
</dbReference>
<dbReference type="InterPro" id="IPR024034">
    <property type="entry name" value="ATPase_F1/V1_b/a_C"/>
</dbReference>
<dbReference type="InterPro" id="IPR027417">
    <property type="entry name" value="P-loop_NTPase"/>
</dbReference>
<dbReference type="NCBIfam" id="TIGR01039">
    <property type="entry name" value="atpD"/>
    <property type="match status" value="1"/>
</dbReference>
<dbReference type="PANTHER" id="PTHR15184">
    <property type="entry name" value="ATP SYNTHASE"/>
    <property type="match status" value="1"/>
</dbReference>
<dbReference type="PANTHER" id="PTHR15184:SF71">
    <property type="entry name" value="ATP SYNTHASE SUBUNIT BETA, MITOCHONDRIAL"/>
    <property type="match status" value="1"/>
</dbReference>
<dbReference type="Pfam" id="PF00006">
    <property type="entry name" value="ATP-synt_ab"/>
    <property type="match status" value="1"/>
</dbReference>
<dbReference type="Pfam" id="PF02874">
    <property type="entry name" value="ATP-synt_ab_N"/>
    <property type="match status" value="1"/>
</dbReference>
<dbReference type="Pfam" id="PF22919">
    <property type="entry name" value="ATP-synt_VA_C"/>
    <property type="match status" value="1"/>
</dbReference>
<dbReference type="SMART" id="SM00382">
    <property type="entry name" value="AAA"/>
    <property type="match status" value="1"/>
</dbReference>
<dbReference type="SUPFAM" id="SSF47917">
    <property type="entry name" value="C-terminal domain of alpha and beta subunits of F1 ATP synthase"/>
    <property type="match status" value="1"/>
</dbReference>
<dbReference type="SUPFAM" id="SSF50615">
    <property type="entry name" value="N-terminal domain of alpha and beta subunits of F1 ATP synthase"/>
    <property type="match status" value="1"/>
</dbReference>
<dbReference type="SUPFAM" id="SSF52540">
    <property type="entry name" value="P-loop containing nucleoside triphosphate hydrolases"/>
    <property type="match status" value="1"/>
</dbReference>
<dbReference type="PROSITE" id="PS00152">
    <property type="entry name" value="ATPASE_ALPHA_BETA"/>
    <property type="match status" value="1"/>
</dbReference>